<protein>
    <recommendedName>
        <fullName evidence="1">ATP synthase subunit a</fullName>
    </recommendedName>
    <alternativeName>
        <fullName evidence="1">ATP synthase F0 sector subunit a</fullName>
    </alternativeName>
    <alternativeName>
        <fullName evidence="1">F-ATPase subunit 6</fullName>
    </alternativeName>
</protein>
<proteinExistence type="inferred from homology"/>
<name>ATP6_VIBPA</name>
<evidence type="ECO:0000255" key="1">
    <source>
        <dbReference type="HAMAP-Rule" id="MF_01393"/>
    </source>
</evidence>
<reference key="1">
    <citation type="journal article" date="2003" name="Lancet">
        <title>Genome sequence of Vibrio parahaemolyticus: a pathogenic mechanism distinct from that of V. cholerae.</title>
        <authorList>
            <person name="Makino K."/>
            <person name="Oshima K."/>
            <person name="Kurokawa K."/>
            <person name="Yokoyama K."/>
            <person name="Uda T."/>
            <person name="Tagomori K."/>
            <person name="Iijima Y."/>
            <person name="Najima M."/>
            <person name="Nakano M."/>
            <person name="Yamashita A."/>
            <person name="Kubota Y."/>
            <person name="Kimura S."/>
            <person name="Yasunaga T."/>
            <person name="Honda T."/>
            <person name="Shinagawa H."/>
            <person name="Hattori M."/>
            <person name="Iida T."/>
        </authorList>
    </citation>
    <scope>NUCLEOTIDE SEQUENCE [LARGE SCALE GENOMIC DNA]</scope>
    <source>
        <strain>RIMD 2210633</strain>
    </source>
</reference>
<keyword id="KW-0066">ATP synthesis</keyword>
<keyword id="KW-0997">Cell inner membrane</keyword>
<keyword id="KW-1003">Cell membrane</keyword>
<keyword id="KW-0138">CF(0)</keyword>
<keyword id="KW-0375">Hydrogen ion transport</keyword>
<keyword id="KW-0406">Ion transport</keyword>
<keyword id="KW-0472">Membrane</keyword>
<keyword id="KW-0812">Transmembrane</keyword>
<keyword id="KW-1133">Transmembrane helix</keyword>
<keyword id="KW-0813">Transport</keyword>
<dbReference type="EMBL" id="BA000031">
    <property type="protein sequence ID" value="BAC61338.1"/>
    <property type="molecule type" value="Genomic_DNA"/>
</dbReference>
<dbReference type="RefSeq" id="NP_799454.1">
    <property type="nucleotide sequence ID" value="NC_004603.1"/>
</dbReference>
<dbReference type="RefSeq" id="WP_005458499.1">
    <property type="nucleotide sequence ID" value="NC_004603.1"/>
</dbReference>
<dbReference type="SMR" id="Q87KA3"/>
<dbReference type="GeneID" id="1190674"/>
<dbReference type="KEGG" id="vpa:VP3075"/>
<dbReference type="PATRIC" id="fig|223926.6.peg.2961"/>
<dbReference type="eggNOG" id="COG0356">
    <property type="taxonomic scope" value="Bacteria"/>
</dbReference>
<dbReference type="HOGENOM" id="CLU_041018_1_0_6"/>
<dbReference type="Proteomes" id="UP000002493">
    <property type="component" value="Chromosome 1"/>
</dbReference>
<dbReference type="GO" id="GO:0005886">
    <property type="term" value="C:plasma membrane"/>
    <property type="evidence" value="ECO:0007669"/>
    <property type="project" value="UniProtKB-SubCell"/>
</dbReference>
<dbReference type="GO" id="GO:0045259">
    <property type="term" value="C:proton-transporting ATP synthase complex"/>
    <property type="evidence" value="ECO:0007669"/>
    <property type="project" value="UniProtKB-KW"/>
</dbReference>
<dbReference type="GO" id="GO:0046933">
    <property type="term" value="F:proton-transporting ATP synthase activity, rotational mechanism"/>
    <property type="evidence" value="ECO:0007669"/>
    <property type="project" value="UniProtKB-UniRule"/>
</dbReference>
<dbReference type="GO" id="GO:0042777">
    <property type="term" value="P:proton motive force-driven plasma membrane ATP synthesis"/>
    <property type="evidence" value="ECO:0007669"/>
    <property type="project" value="TreeGrafter"/>
</dbReference>
<dbReference type="CDD" id="cd00310">
    <property type="entry name" value="ATP-synt_Fo_a_6"/>
    <property type="match status" value="1"/>
</dbReference>
<dbReference type="FunFam" id="1.20.120.220:FF:000002">
    <property type="entry name" value="ATP synthase subunit a"/>
    <property type="match status" value="1"/>
</dbReference>
<dbReference type="Gene3D" id="1.20.120.220">
    <property type="entry name" value="ATP synthase, F0 complex, subunit A"/>
    <property type="match status" value="1"/>
</dbReference>
<dbReference type="HAMAP" id="MF_01393">
    <property type="entry name" value="ATP_synth_a_bact"/>
    <property type="match status" value="1"/>
</dbReference>
<dbReference type="InterPro" id="IPR045082">
    <property type="entry name" value="ATP_syn_F0_a_bact/chloroplast"/>
</dbReference>
<dbReference type="InterPro" id="IPR000568">
    <property type="entry name" value="ATP_synth_F0_asu"/>
</dbReference>
<dbReference type="InterPro" id="IPR023011">
    <property type="entry name" value="ATP_synth_F0_asu_AS"/>
</dbReference>
<dbReference type="InterPro" id="IPR035908">
    <property type="entry name" value="F0_ATP_A_sf"/>
</dbReference>
<dbReference type="NCBIfam" id="TIGR01131">
    <property type="entry name" value="ATP_synt_6_or_A"/>
    <property type="match status" value="1"/>
</dbReference>
<dbReference type="NCBIfam" id="NF004477">
    <property type="entry name" value="PRK05815.1-1"/>
    <property type="match status" value="1"/>
</dbReference>
<dbReference type="PANTHER" id="PTHR42823">
    <property type="entry name" value="ATP SYNTHASE SUBUNIT A, CHLOROPLASTIC"/>
    <property type="match status" value="1"/>
</dbReference>
<dbReference type="PANTHER" id="PTHR42823:SF3">
    <property type="entry name" value="ATP SYNTHASE SUBUNIT A, CHLOROPLASTIC"/>
    <property type="match status" value="1"/>
</dbReference>
<dbReference type="Pfam" id="PF00119">
    <property type="entry name" value="ATP-synt_A"/>
    <property type="match status" value="1"/>
</dbReference>
<dbReference type="PRINTS" id="PR00123">
    <property type="entry name" value="ATPASEA"/>
</dbReference>
<dbReference type="SUPFAM" id="SSF81336">
    <property type="entry name" value="F1F0 ATP synthase subunit A"/>
    <property type="match status" value="1"/>
</dbReference>
<dbReference type="PROSITE" id="PS00449">
    <property type="entry name" value="ATPASE_A"/>
    <property type="match status" value="1"/>
</dbReference>
<accession>Q87KA3</accession>
<gene>
    <name evidence="1" type="primary">atpB</name>
    <name type="ordered locus">VP3075</name>
</gene>
<feature type="chain" id="PRO_0000362503" description="ATP synthase subunit a">
    <location>
        <begin position="1"/>
        <end position="270"/>
    </location>
</feature>
<feature type="transmembrane region" description="Helical" evidence="1">
    <location>
        <begin position="38"/>
        <end position="58"/>
    </location>
</feature>
<feature type="transmembrane region" description="Helical" evidence="1">
    <location>
        <begin position="98"/>
        <end position="118"/>
    </location>
</feature>
<feature type="transmembrane region" description="Helical" evidence="1">
    <location>
        <begin position="143"/>
        <end position="163"/>
    </location>
</feature>
<feature type="transmembrane region" description="Helical" evidence="1">
    <location>
        <begin position="208"/>
        <end position="228"/>
    </location>
</feature>
<feature type="transmembrane region" description="Helical" evidence="1">
    <location>
        <begin position="239"/>
        <end position="259"/>
    </location>
</feature>
<organism>
    <name type="scientific">Vibrio parahaemolyticus serotype O3:K6 (strain RIMD 2210633)</name>
    <dbReference type="NCBI Taxonomy" id="223926"/>
    <lineage>
        <taxon>Bacteria</taxon>
        <taxon>Pseudomonadati</taxon>
        <taxon>Pseudomonadota</taxon>
        <taxon>Gammaproteobacteria</taxon>
        <taxon>Vibrionales</taxon>
        <taxon>Vibrionaceae</taxon>
        <taxon>Vibrio</taxon>
    </lineage>
</organism>
<sequence>MAAPGEALTSSGYIAHHLSNLSLYKLGLVGSETSFWNVHIDSLFFSWFTGLIFLGIFYKVAKRTTAGVPGKLQCAVEMIVEFVADNVKDTFHGRNPLIAPLALTIFCWVFLMNVMDLVPIDFLPYPAEHWLGIPYLKVVPSADVNITMAMALGVFALMIYYSIKVKGLGGFAKELALHPFNHPLMIPFNLLIEVVSLLAKPLSLGMRLFGNMFAGEVVFILCAAMLPWYLQWMGSLPWAIFHILVITIQAFVFMMLTIVYLSMAHEDSDH</sequence>
<comment type="function">
    <text evidence="1">Key component of the proton channel; it plays a direct role in the translocation of protons across the membrane.</text>
</comment>
<comment type="subunit">
    <text evidence="1">F-type ATPases have 2 components, CF(1) - the catalytic core - and CF(0) - the membrane proton channel. CF(1) has five subunits: alpha(3), beta(3), gamma(1), delta(1), epsilon(1). CF(0) has three main subunits: a(1), b(2) and c(9-12). The alpha and beta chains form an alternating ring which encloses part of the gamma chain. CF(1) is attached to CF(0) by a central stalk formed by the gamma and epsilon chains, while a peripheral stalk is formed by the delta and b chains.</text>
</comment>
<comment type="subcellular location">
    <subcellularLocation>
        <location evidence="1">Cell inner membrane</location>
        <topology evidence="1">Multi-pass membrane protein</topology>
    </subcellularLocation>
</comment>
<comment type="similarity">
    <text evidence="1">Belongs to the ATPase A chain family.</text>
</comment>